<accession>Q9AHG3</accession>
<reference key="1">
    <citation type="journal article" date="2001" name="Appl. Environ. Microbiol.">
        <title>Map of the IncP1beta plasmid pTSA encoding the widespread genes (tsa) for p-toluenesulfonate degradation in Comamonas testosteroni T-2.</title>
        <authorList>
            <person name="Tralau T."/>
            <person name="Cook A.M."/>
            <person name="Ruff J."/>
        </authorList>
    </citation>
    <scope>NUCLEOTIDE SEQUENCE [GENOMIC DNA]</scope>
    <scope>LACK OF EXPRESSION</scope>
    <source>
        <strain>DSM 6577 / T-2</strain>
    </source>
</reference>
<reference key="2">
    <citation type="journal article" date="2004" name="Biochem. J.">
        <title>A novel outer-membrane anion channel (porin) as part of a putatively two-component transport system for 4-toluenesulphonate in Comamonas testosteroni T-2.</title>
        <authorList>
            <person name="Mampel J."/>
            <person name="Maier E."/>
            <person name="Tralau T."/>
            <person name="Ruff J."/>
            <person name="Benz R."/>
            <person name="Cook A.M."/>
        </authorList>
    </citation>
    <scope>NUCLEOTIDE SEQUENCE [GENOMIC DNA]</scope>
    <source>
        <strain>DSM 6577 / T-2</strain>
    </source>
</reference>
<reference key="3">
    <citation type="journal article" date="1991" name="J. Gen. Microbiol.">
        <title>Degradation of p-toluic acid (p-toluenecarboxylic acid) and p-toluenesulphonic acid via oxygenation of the methyl sidechain is initiated by the same set of enzymes in Comamonas testosteroni T-2.</title>
        <authorList>
            <person name="Locher H.H."/>
            <person name="Malli C."/>
            <person name="Hooper S.W."/>
            <person name="Vorherr T."/>
            <person name="Leisinger T."/>
            <person name="Cook A.M."/>
        </authorList>
    </citation>
    <scope>FUNCTION</scope>
</reference>
<keyword id="KW-0001">2Fe-2S</keyword>
<keyword id="KW-0058">Aromatic hydrocarbons catabolism</keyword>
<keyword id="KW-0274">FAD</keyword>
<keyword id="KW-0285">Flavoprotein</keyword>
<keyword id="KW-0408">Iron</keyword>
<keyword id="KW-0411">Iron-sulfur</keyword>
<keyword id="KW-0479">Metal-binding</keyword>
<keyword id="KW-0503">Monooxygenase</keyword>
<keyword id="KW-0560">Oxidoreductase</keyword>
<keyword id="KW-0614">Plasmid</keyword>
<evidence type="ECO:0000250" key="1"/>
<evidence type="ECO:0000255" key="2">
    <source>
        <dbReference type="PROSITE-ProRule" id="PRU00628"/>
    </source>
</evidence>
<evidence type="ECO:0000269" key="3">
    <source ref="3"/>
</evidence>
<evidence type="ECO:0000305" key="4">
    <source>
    </source>
</evidence>
<protein>
    <recommendedName>
        <fullName>Putative toluene-4-sulfonate monooxygenase system iron-sulfur subunit TsaM2</fullName>
        <ecNumber>1.14.14.-</ecNumber>
    </recommendedName>
    <alternativeName>
        <fullName>Toluenesulfonate methyl-monooxygenase oxygenase component TsaM2</fullName>
    </alternativeName>
</protein>
<gene>
    <name type="primary">tsaM2</name>
</gene>
<name>TSAM2_COMTE</name>
<comment type="function">
    <text evidence="1 3">Involved in the toluene-4-sulfonate degradation pathway. Does not discriminate between the sulfonate and the carboxyl substituents and can also be involved in the p-toluenecarboxylate degradation pathway (By similarity).</text>
</comment>
<comment type="catalytic activity">
    <reaction>
        <text>toluene-4-sulfonate + NADH + O2 + H(+) = 4-(hydroxymethyl)benzenesulfonate + NAD(+) + H2O</text>
        <dbReference type="Rhea" id="RHEA:51024"/>
        <dbReference type="ChEBI" id="CHEBI:11944"/>
        <dbReference type="ChEBI" id="CHEBI:15377"/>
        <dbReference type="ChEBI" id="CHEBI:15378"/>
        <dbReference type="ChEBI" id="CHEBI:15379"/>
        <dbReference type="ChEBI" id="CHEBI:27023"/>
        <dbReference type="ChEBI" id="CHEBI:57540"/>
        <dbReference type="ChEBI" id="CHEBI:57945"/>
    </reaction>
</comment>
<comment type="cofactor">
    <cofactor>
        <name>[2Fe-2S] cluster</name>
        <dbReference type="ChEBI" id="CHEBI:190135"/>
    </cofactor>
    <text>Binds 1 [2Fe-2S] cluster per subunit.</text>
</comment>
<comment type="subunit">
    <text>Homotetramer. Part of the p-toluenesulfonate methyl-monooxygenase complex TsaBM, comprising the reductase TsaB and the oxygenase TsaM.</text>
</comment>
<comment type="caution">
    <text evidence="4">Could be the product of a pseudogene. Probably not expressed, due to the absence of promoter-like sequences upstream of the operon tsaMBCD2 (PubMed:11282598).</text>
</comment>
<proteinExistence type="uncertain"/>
<organism>
    <name type="scientific">Comamonas testosteroni</name>
    <name type="common">Pseudomonas testosteroni</name>
    <dbReference type="NCBI Taxonomy" id="285"/>
    <lineage>
        <taxon>Bacteria</taxon>
        <taxon>Pseudomonadati</taxon>
        <taxon>Pseudomonadota</taxon>
        <taxon>Betaproteobacteria</taxon>
        <taxon>Burkholderiales</taxon>
        <taxon>Comamonadaceae</taxon>
        <taxon>Comamonas</taxon>
    </lineage>
</organism>
<geneLocation type="plasmid">
    <name>pTSA</name>
</geneLocation>
<dbReference type="EC" id="1.14.14.-"/>
<dbReference type="EMBL" id="AH010657">
    <property type="protein sequence ID" value="AAK37996.1"/>
    <property type="molecule type" value="Genomic_DNA"/>
</dbReference>
<dbReference type="SMR" id="Q9AHG3"/>
<dbReference type="GO" id="GO:0051537">
    <property type="term" value="F:2 iron, 2 sulfur cluster binding"/>
    <property type="evidence" value="ECO:0007669"/>
    <property type="project" value="UniProtKB-KW"/>
</dbReference>
<dbReference type="GO" id="GO:0046872">
    <property type="term" value="F:metal ion binding"/>
    <property type="evidence" value="ECO:0007669"/>
    <property type="project" value="UniProtKB-KW"/>
</dbReference>
<dbReference type="GO" id="GO:0018652">
    <property type="term" value="F:toluene-sulfonate methyl-monooxygenase activity"/>
    <property type="evidence" value="ECO:0007669"/>
    <property type="project" value="RHEA"/>
</dbReference>
<dbReference type="GO" id="GO:0009056">
    <property type="term" value="P:catabolic process"/>
    <property type="evidence" value="ECO:0007669"/>
    <property type="project" value="UniProtKB-KW"/>
</dbReference>
<dbReference type="CDD" id="cd08878">
    <property type="entry name" value="RHO_alpha_C_DMO-like"/>
    <property type="match status" value="1"/>
</dbReference>
<dbReference type="Gene3D" id="3.90.380.10">
    <property type="entry name" value="Naphthalene 1,2-dioxygenase Alpha Subunit, Chain A, domain 1"/>
    <property type="match status" value="1"/>
</dbReference>
<dbReference type="Gene3D" id="2.102.10.10">
    <property type="entry name" value="Rieske [2Fe-2S] iron-sulphur domain"/>
    <property type="match status" value="1"/>
</dbReference>
<dbReference type="InterPro" id="IPR050584">
    <property type="entry name" value="Cholesterol_7-desaturase"/>
</dbReference>
<dbReference type="InterPro" id="IPR017941">
    <property type="entry name" value="Rieske_2Fe-2S"/>
</dbReference>
<dbReference type="InterPro" id="IPR036922">
    <property type="entry name" value="Rieske_2Fe-2S_sf"/>
</dbReference>
<dbReference type="InterPro" id="IPR044043">
    <property type="entry name" value="VanA_C_cat"/>
</dbReference>
<dbReference type="PANTHER" id="PTHR21266:SF60">
    <property type="entry name" value="3-KETOSTEROID-9-ALPHA-MONOOXYGENASE, OXYGENASE COMPONENT"/>
    <property type="match status" value="1"/>
</dbReference>
<dbReference type="PANTHER" id="PTHR21266">
    <property type="entry name" value="IRON-SULFUR DOMAIN CONTAINING PROTEIN"/>
    <property type="match status" value="1"/>
</dbReference>
<dbReference type="Pfam" id="PF00355">
    <property type="entry name" value="Rieske"/>
    <property type="match status" value="1"/>
</dbReference>
<dbReference type="Pfam" id="PF19112">
    <property type="entry name" value="VanA_C"/>
    <property type="match status" value="1"/>
</dbReference>
<dbReference type="SUPFAM" id="SSF55961">
    <property type="entry name" value="Bet v1-like"/>
    <property type="match status" value="1"/>
</dbReference>
<dbReference type="SUPFAM" id="SSF50022">
    <property type="entry name" value="ISP domain"/>
    <property type="match status" value="1"/>
</dbReference>
<dbReference type="PROSITE" id="PS51296">
    <property type="entry name" value="RIESKE"/>
    <property type="match status" value="1"/>
</dbReference>
<sequence>MLVKNTWYVAGMATDCSRKPLARTFLNEKVVLFRTHDGHAVALEDRCCHRLAPLSLGDVEDAGIRCRYHGMVFNASGACVEIPGQEQIPPGMCVRRFPLVERHGLLWIWMGDPARANPDDIVDELWNGAPEWRTDSGYIHYQANYQLIVDNLLDFTHLAWVHPTTLGTDSAASLKPVIERDTTGTGKLTITRWYLNDDMSNLHKGVAKFEGKADRWQIYQWSPPALLRMDTGSAPTGTGAPEGRRVPEAVQFRHTSIQTPETETTSHYWFCQARNFDLDDEALTEKIYQGVVVAFEEDRTMIEAQQKILSQVPDRPMVPIAADAGLNQGRWLLDRLLKAENGGTAP</sequence>
<feature type="chain" id="PRO_0000419120" description="Putative toluene-4-sulfonate monooxygenase system iron-sulfur subunit TsaM2">
    <location>
        <begin position="1"/>
        <end position="346"/>
    </location>
</feature>
<feature type="domain" description="Rieske" evidence="2">
    <location>
        <begin position="7"/>
        <end position="108"/>
    </location>
</feature>
<feature type="binding site" evidence="2">
    <location>
        <position position="47"/>
    </location>
    <ligand>
        <name>[2Fe-2S] cluster</name>
        <dbReference type="ChEBI" id="CHEBI:190135"/>
    </ligand>
</feature>
<feature type="binding site" evidence="2">
    <location>
        <position position="49"/>
    </location>
    <ligand>
        <name>[2Fe-2S] cluster</name>
        <dbReference type="ChEBI" id="CHEBI:190135"/>
    </ligand>
</feature>
<feature type="binding site" evidence="2">
    <location>
        <position position="66"/>
    </location>
    <ligand>
        <name>[2Fe-2S] cluster</name>
        <dbReference type="ChEBI" id="CHEBI:190135"/>
    </ligand>
</feature>
<feature type="binding site" evidence="2">
    <location>
        <position position="69"/>
    </location>
    <ligand>
        <name>[2Fe-2S] cluster</name>
        <dbReference type="ChEBI" id="CHEBI:190135"/>
    </ligand>
</feature>